<dbReference type="EMBL" id="AL137898">
    <property type="protein sequence ID" value="CAB71066.1"/>
    <property type="molecule type" value="Genomic_DNA"/>
</dbReference>
<dbReference type="EMBL" id="CP002686">
    <property type="protein sequence ID" value="AEE80190.1"/>
    <property type="molecule type" value="Genomic_DNA"/>
</dbReference>
<dbReference type="EMBL" id="BT001924">
    <property type="protein sequence ID" value="AAN71923.1"/>
    <property type="molecule type" value="mRNA"/>
</dbReference>
<dbReference type="PIR" id="T47928">
    <property type="entry name" value="T47928"/>
</dbReference>
<dbReference type="RefSeq" id="NP_191695.1">
    <property type="nucleotide sequence ID" value="NM_116000.1"/>
</dbReference>
<dbReference type="SMR" id="Q9M2C8"/>
<dbReference type="FunCoup" id="Q9M2C8">
    <property type="interactions" value="165"/>
</dbReference>
<dbReference type="STRING" id="3702.Q9M2C8"/>
<dbReference type="iPTMnet" id="Q9M2C8"/>
<dbReference type="PaxDb" id="3702-AT3G61360.1"/>
<dbReference type="ProteomicsDB" id="249198"/>
<dbReference type="EnsemblPlants" id="AT3G61360.1">
    <property type="protein sequence ID" value="AT3G61360.1"/>
    <property type="gene ID" value="AT3G61360"/>
</dbReference>
<dbReference type="GeneID" id="825308"/>
<dbReference type="Gramene" id="AT3G61360.1">
    <property type="protein sequence ID" value="AT3G61360.1"/>
    <property type="gene ID" value="AT3G61360"/>
</dbReference>
<dbReference type="KEGG" id="ath:AT3G61360"/>
<dbReference type="Araport" id="AT3G61360"/>
<dbReference type="TAIR" id="AT3G61360">
    <property type="gene designation" value="SLO3"/>
</dbReference>
<dbReference type="eggNOG" id="KOG4197">
    <property type="taxonomic scope" value="Eukaryota"/>
</dbReference>
<dbReference type="HOGENOM" id="CLU_002706_49_20_1"/>
<dbReference type="InParanoid" id="Q9M2C8"/>
<dbReference type="OMA" id="AFEFFKF"/>
<dbReference type="PhylomeDB" id="Q9M2C8"/>
<dbReference type="PRO" id="PR:Q9M2C8"/>
<dbReference type="Proteomes" id="UP000006548">
    <property type="component" value="Chromosome 3"/>
</dbReference>
<dbReference type="ExpressionAtlas" id="Q9M2C8">
    <property type="expression patterns" value="baseline and differential"/>
</dbReference>
<dbReference type="GO" id="GO:0005739">
    <property type="term" value="C:mitochondrion"/>
    <property type="evidence" value="ECO:0000314"/>
    <property type="project" value="TAIR"/>
</dbReference>
<dbReference type="GO" id="GO:0000398">
    <property type="term" value="P:mRNA splicing, via spliceosome"/>
    <property type="evidence" value="ECO:0000315"/>
    <property type="project" value="TAIR"/>
</dbReference>
<dbReference type="FunFam" id="1.25.40.10:FF:002108">
    <property type="entry name" value="Pentatricopeptide repeat-containing protein At3g61360"/>
    <property type="match status" value="1"/>
</dbReference>
<dbReference type="Gene3D" id="1.25.40.10">
    <property type="entry name" value="Tetratricopeptide repeat domain"/>
    <property type="match status" value="3"/>
</dbReference>
<dbReference type="InterPro" id="IPR002885">
    <property type="entry name" value="Pentatricopeptide_rpt"/>
</dbReference>
<dbReference type="InterPro" id="IPR011990">
    <property type="entry name" value="TPR-like_helical_dom_sf"/>
</dbReference>
<dbReference type="NCBIfam" id="TIGR00756">
    <property type="entry name" value="PPR"/>
    <property type="match status" value="5"/>
</dbReference>
<dbReference type="PANTHER" id="PTHR47447">
    <property type="entry name" value="OS03G0856100 PROTEIN"/>
    <property type="match status" value="1"/>
</dbReference>
<dbReference type="PANTHER" id="PTHR47447:SF23">
    <property type="entry name" value="PENTACOTRIPEPTIDE-REPEAT REGION OF PRORP DOMAIN-CONTAINING PROTEIN"/>
    <property type="match status" value="1"/>
</dbReference>
<dbReference type="Pfam" id="PF01535">
    <property type="entry name" value="PPR"/>
    <property type="match status" value="3"/>
</dbReference>
<dbReference type="Pfam" id="PF13041">
    <property type="entry name" value="PPR_2"/>
    <property type="match status" value="2"/>
</dbReference>
<dbReference type="PROSITE" id="PS51375">
    <property type="entry name" value="PPR"/>
    <property type="match status" value="9"/>
</dbReference>
<sequence>MLQKISSDSYRRLLAPVLSSSSSLSSTSINRTEIERITIIINGHPFPNHPIQPILAKHIPLSSLSPEFVSEVLGRLFAAHSNGLKALEFFKYSLKSSKSSPTSDSFEKTLHILARMRYFDQAWALMAEVRKDYPNLLSFKSMSILLCKIAKFGSYEETLEAFVKMEKEIFRKKFGVDEFNILLRAFCTEREMKEARSIFEKLHSRFNPDVKTMNILLLGFKEAGDVTATELFYHEMVKRGFKPNSVTYGIRIDGFCKKRNFGEALRLFEDMDRLDFDITVQILTTLIHGSGVARNKIKARQLFDEISKRGLTPDCGAYNALMSSLMKCGDVSGAIKVMKEMEEKGIEPDSVTFHSMFIGMMKSKEFGFNGVCEYYQKMKERSLVPKTPTIVMLMKLFCHNGEVNLGLDLWKYMLEKGYCPHGHALELLTTALCARRRANDAFECSWQTVERGRCVSEPVYRMLETSLSSNNELKKLEELKEEIQKLHSFLPPPEIQLM</sequence>
<organism>
    <name type="scientific">Arabidopsis thaliana</name>
    <name type="common">Mouse-ear cress</name>
    <dbReference type="NCBI Taxonomy" id="3702"/>
    <lineage>
        <taxon>Eukaryota</taxon>
        <taxon>Viridiplantae</taxon>
        <taxon>Streptophyta</taxon>
        <taxon>Embryophyta</taxon>
        <taxon>Tracheophyta</taxon>
        <taxon>Spermatophyta</taxon>
        <taxon>Magnoliopsida</taxon>
        <taxon>eudicotyledons</taxon>
        <taxon>Gunneridae</taxon>
        <taxon>Pentapetalae</taxon>
        <taxon>rosids</taxon>
        <taxon>malvids</taxon>
        <taxon>Brassicales</taxon>
        <taxon>Brassicaceae</taxon>
        <taxon>Camelineae</taxon>
        <taxon>Arabidopsis</taxon>
    </lineage>
</organism>
<accession>Q9M2C8</accession>
<gene>
    <name type="ordered locus">At3g61360</name>
    <name type="ORF">T20K12.260</name>
</gene>
<keyword id="KW-1185">Reference proteome</keyword>
<keyword id="KW-0677">Repeat</keyword>
<comment type="similarity">
    <text evidence="1">Belongs to the PPR family. P subfamily.</text>
</comment>
<comment type="online information" name="Pentatricopeptide repeat proteins">
    <link uri="https://ppr.plantenergy.uwa.edu.au"/>
</comment>
<reference key="1">
    <citation type="journal article" date="2000" name="Nature">
        <title>Sequence and analysis of chromosome 3 of the plant Arabidopsis thaliana.</title>
        <authorList>
            <person name="Salanoubat M."/>
            <person name="Lemcke K."/>
            <person name="Rieger M."/>
            <person name="Ansorge W."/>
            <person name="Unseld M."/>
            <person name="Fartmann B."/>
            <person name="Valle G."/>
            <person name="Bloecker H."/>
            <person name="Perez-Alonso M."/>
            <person name="Obermaier B."/>
            <person name="Delseny M."/>
            <person name="Boutry M."/>
            <person name="Grivell L.A."/>
            <person name="Mache R."/>
            <person name="Puigdomenech P."/>
            <person name="De Simone V."/>
            <person name="Choisne N."/>
            <person name="Artiguenave F."/>
            <person name="Robert C."/>
            <person name="Brottier P."/>
            <person name="Wincker P."/>
            <person name="Cattolico L."/>
            <person name="Weissenbach J."/>
            <person name="Saurin W."/>
            <person name="Quetier F."/>
            <person name="Schaefer M."/>
            <person name="Mueller-Auer S."/>
            <person name="Gabel C."/>
            <person name="Fuchs M."/>
            <person name="Benes V."/>
            <person name="Wurmbach E."/>
            <person name="Drzonek H."/>
            <person name="Erfle H."/>
            <person name="Jordan N."/>
            <person name="Bangert S."/>
            <person name="Wiedelmann R."/>
            <person name="Kranz H."/>
            <person name="Voss H."/>
            <person name="Holland R."/>
            <person name="Brandt P."/>
            <person name="Nyakatura G."/>
            <person name="Vezzi A."/>
            <person name="D'Angelo M."/>
            <person name="Pallavicini A."/>
            <person name="Toppo S."/>
            <person name="Simionati B."/>
            <person name="Conrad A."/>
            <person name="Hornischer K."/>
            <person name="Kauer G."/>
            <person name="Loehnert T.-H."/>
            <person name="Nordsiek G."/>
            <person name="Reichelt J."/>
            <person name="Scharfe M."/>
            <person name="Schoen O."/>
            <person name="Bargues M."/>
            <person name="Terol J."/>
            <person name="Climent J."/>
            <person name="Navarro P."/>
            <person name="Collado C."/>
            <person name="Perez-Perez A."/>
            <person name="Ottenwaelder B."/>
            <person name="Duchemin D."/>
            <person name="Cooke R."/>
            <person name="Laudie M."/>
            <person name="Berger-Llauro C."/>
            <person name="Purnelle B."/>
            <person name="Masuy D."/>
            <person name="de Haan M."/>
            <person name="Maarse A.C."/>
            <person name="Alcaraz J.-P."/>
            <person name="Cottet A."/>
            <person name="Casacuberta E."/>
            <person name="Monfort A."/>
            <person name="Argiriou A."/>
            <person name="Flores M."/>
            <person name="Liguori R."/>
            <person name="Vitale D."/>
            <person name="Mannhaupt G."/>
            <person name="Haase D."/>
            <person name="Schoof H."/>
            <person name="Rudd S."/>
            <person name="Zaccaria P."/>
            <person name="Mewes H.-W."/>
            <person name="Mayer K.F.X."/>
            <person name="Kaul S."/>
            <person name="Town C.D."/>
            <person name="Koo H.L."/>
            <person name="Tallon L.J."/>
            <person name="Jenkins J."/>
            <person name="Rooney T."/>
            <person name="Rizzo M."/>
            <person name="Walts A."/>
            <person name="Utterback T."/>
            <person name="Fujii C.Y."/>
            <person name="Shea T.P."/>
            <person name="Creasy T.H."/>
            <person name="Haas B."/>
            <person name="Maiti R."/>
            <person name="Wu D."/>
            <person name="Peterson J."/>
            <person name="Van Aken S."/>
            <person name="Pai G."/>
            <person name="Militscher J."/>
            <person name="Sellers P."/>
            <person name="Gill J.E."/>
            <person name="Feldblyum T.V."/>
            <person name="Preuss D."/>
            <person name="Lin X."/>
            <person name="Nierman W.C."/>
            <person name="Salzberg S.L."/>
            <person name="White O."/>
            <person name="Venter J.C."/>
            <person name="Fraser C.M."/>
            <person name="Kaneko T."/>
            <person name="Nakamura Y."/>
            <person name="Sato S."/>
            <person name="Kato T."/>
            <person name="Asamizu E."/>
            <person name="Sasamoto S."/>
            <person name="Kimura T."/>
            <person name="Idesawa K."/>
            <person name="Kawashima K."/>
            <person name="Kishida Y."/>
            <person name="Kiyokawa C."/>
            <person name="Kohara M."/>
            <person name="Matsumoto M."/>
            <person name="Matsuno A."/>
            <person name="Muraki A."/>
            <person name="Nakayama S."/>
            <person name="Nakazaki N."/>
            <person name="Shinpo S."/>
            <person name="Takeuchi C."/>
            <person name="Wada T."/>
            <person name="Watanabe A."/>
            <person name="Yamada M."/>
            <person name="Yasuda M."/>
            <person name="Tabata S."/>
        </authorList>
    </citation>
    <scope>NUCLEOTIDE SEQUENCE [LARGE SCALE GENOMIC DNA]</scope>
    <source>
        <strain>cv. Columbia</strain>
    </source>
</reference>
<reference key="2">
    <citation type="journal article" date="2017" name="Plant J.">
        <title>Araport11: a complete reannotation of the Arabidopsis thaliana reference genome.</title>
        <authorList>
            <person name="Cheng C.Y."/>
            <person name="Krishnakumar V."/>
            <person name="Chan A.P."/>
            <person name="Thibaud-Nissen F."/>
            <person name="Schobel S."/>
            <person name="Town C.D."/>
        </authorList>
    </citation>
    <scope>GENOME REANNOTATION</scope>
    <source>
        <strain>cv. Columbia</strain>
    </source>
</reference>
<reference key="3">
    <citation type="journal article" date="2003" name="Science">
        <title>Empirical analysis of transcriptional activity in the Arabidopsis genome.</title>
        <authorList>
            <person name="Yamada K."/>
            <person name="Lim J."/>
            <person name="Dale J.M."/>
            <person name="Chen H."/>
            <person name="Shinn P."/>
            <person name="Palm C.J."/>
            <person name="Southwick A.M."/>
            <person name="Wu H.C."/>
            <person name="Kim C.J."/>
            <person name="Nguyen M."/>
            <person name="Pham P.K."/>
            <person name="Cheuk R.F."/>
            <person name="Karlin-Newmann G."/>
            <person name="Liu S.X."/>
            <person name="Lam B."/>
            <person name="Sakano H."/>
            <person name="Wu T."/>
            <person name="Yu G."/>
            <person name="Miranda M."/>
            <person name="Quach H.L."/>
            <person name="Tripp M."/>
            <person name="Chang C.H."/>
            <person name="Lee J.M."/>
            <person name="Toriumi M.J."/>
            <person name="Chan M.M."/>
            <person name="Tang C.C."/>
            <person name="Onodera C.S."/>
            <person name="Deng J.M."/>
            <person name="Akiyama K."/>
            <person name="Ansari Y."/>
            <person name="Arakawa T."/>
            <person name="Banh J."/>
            <person name="Banno F."/>
            <person name="Bowser L."/>
            <person name="Brooks S.Y."/>
            <person name="Carninci P."/>
            <person name="Chao Q."/>
            <person name="Choy N."/>
            <person name="Enju A."/>
            <person name="Goldsmith A.D."/>
            <person name="Gurjal M."/>
            <person name="Hansen N.F."/>
            <person name="Hayashizaki Y."/>
            <person name="Johnson-Hopson C."/>
            <person name="Hsuan V.W."/>
            <person name="Iida K."/>
            <person name="Karnes M."/>
            <person name="Khan S."/>
            <person name="Koesema E."/>
            <person name="Ishida J."/>
            <person name="Jiang P.X."/>
            <person name="Jones T."/>
            <person name="Kawai J."/>
            <person name="Kamiya A."/>
            <person name="Meyers C."/>
            <person name="Nakajima M."/>
            <person name="Narusaka M."/>
            <person name="Seki M."/>
            <person name="Sakurai T."/>
            <person name="Satou M."/>
            <person name="Tamse R."/>
            <person name="Vaysberg M."/>
            <person name="Wallender E.K."/>
            <person name="Wong C."/>
            <person name="Yamamura Y."/>
            <person name="Yuan S."/>
            <person name="Shinozaki K."/>
            <person name="Davis R.W."/>
            <person name="Theologis A."/>
            <person name="Ecker J.R."/>
        </authorList>
    </citation>
    <scope>NUCLEOTIDE SEQUENCE [LARGE SCALE MRNA]</scope>
    <source>
        <strain>cv. Columbia</strain>
    </source>
</reference>
<reference key="4">
    <citation type="journal article" date="2004" name="Plant Cell">
        <title>Genome-wide analysis of Arabidopsis pentatricopeptide repeat proteins reveals their essential role in organelle biogenesis.</title>
        <authorList>
            <person name="Lurin C."/>
            <person name="Andres C."/>
            <person name="Aubourg S."/>
            <person name="Bellaoui M."/>
            <person name="Bitton F."/>
            <person name="Bruyere C."/>
            <person name="Caboche M."/>
            <person name="Debast C."/>
            <person name="Gualberto J."/>
            <person name="Hoffmann B."/>
            <person name="Lecharny A."/>
            <person name="Le Ret M."/>
            <person name="Martin-Magniette M.-L."/>
            <person name="Mireau H."/>
            <person name="Peeters N."/>
            <person name="Renou J.-P."/>
            <person name="Szurek B."/>
            <person name="Taconnat L."/>
            <person name="Small I."/>
        </authorList>
    </citation>
    <scope>GENE FAMILY</scope>
</reference>
<proteinExistence type="evidence at transcript level"/>
<protein>
    <recommendedName>
        <fullName>Pentatricopeptide repeat-containing protein At3g61360</fullName>
    </recommendedName>
</protein>
<name>PP291_ARATH</name>
<evidence type="ECO:0000305" key="1"/>
<feature type="chain" id="PRO_0000356150" description="Pentatricopeptide repeat-containing protein At3g61360">
    <location>
        <begin position="1"/>
        <end position="498"/>
    </location>
</feature>
<feature type="repeat" description="PPR 1">
    <location>
        <begin position="102"/>
        <end position="132"/>
    </location>
</feature>
<feature type="repeat" description="PPR 2">
    <location>
        <begin position="138"/>
        <end position="172"/>
    </location>
</feature>
<feature type="repeat" description="PPR 3">
    <location>
        <begin position="175"/>
        <end position="205"/>
    </location>
</feature>
<feature type="repeat" description="PPR 4">
    <location>
        <begin position="209"/>
        <end position="243"/>
    </location>
</feature>
<feature type="repeat" description="PPR 5">
    <location>
        <begin position="244"/>
        <end position="278"/>
    </location>
</feature>
<feature type="repeat" description="PPR 6">
    <location>
        <begin position="279"/>
        <end position="313"/>
    </location>
</feature>
<feature type="repeat" description="PPR 7">
    <location>
        <begin position="314"/>
        <end position="348"/>
    </location>
</feature>
<feature type="repeat" description="PPR 8">
    <location>
        <begin position="349"/>
        <end position="385"/>
    </location>
</feature>
<feature type="repeat" description="PPR 9">
    <location>
        <begin position="386"/>
        <end position="420"/>
    </location>
</feature>